<sequence length="204" mass="24279">MGAYKYIEELWKKKQSDVMRFLQRVRCWEFRQLPGIVRVTRPSRPDKARRLGYKAKQGYVVYRVRVRRGGRKRPVPKGIVYGKPKNQGITQLKFQRSLRSVAEERAGRKLGGLRVLNSYWINQDSTYKYYEIILVDQAHSAIRKDPRINWICNAVHKHRELRGLTSAGKKYRGLRGRGHLYHKARPSKRATWKRNNTLSLRRYR</sequence>
<comment type="similarity">
    <text evidence="1">Belongs to the eukaryotic ribosomal protein eL15 family.</text>
</comment>
<keyword id="KW-0687">Ribonucleoprotein</keyword>
<keyword id="KW-0689">Ribosomal protein</keyword>
<reference key="1">
    <citation type="journal article" date="1998" name="Genetics">
        <title>Sequence-tagged-site (STS) markers of arbitrary genes: development, characterization and analysis of linkage in black spruce.</title>
        <authorList>
            <person name="Perry D.J."/>
            <person name="Bousquet J."/>
        </authorList>
    </citation>
    <scope>NUCLEOTIDE SEQUENCE [GENOMIC DNA / MRNA]</scope>
</reference>
<protein>
    <recommendedName>
        <fullName evidence="1">Large ribosomal subunit protein eL15z</fullName>
    </recommendedName>
    <alternativeName>
        <fullName>60S ribosomal protein L15-1</fullName>
    </alternativeName>
</protein>
<gene>
    <name type="primary">SB61</name>
</gene>
<name>RL15A_PICMA</name>
<feature type="chain" id="PRO_0000127558" description="Large ribosomal subunit protein eL15z">
    <location>
        <begin position="1"/>
        <end position="204"/>
    </location>
</feature>
<proteinExistence type="evidence at transcript level"/>
<dbReference type="EMBL" id="AF051207">
    <property type="protein sequence ID" value="AAC32112.1"/>
    <property type="molecule type" value="mRNA"/>
</dbReference>
<dbReference type="EMBL" id="AF051741">
    <property type="protein sequence ID" value="AAC32160.1"/>
    <property type="molecule type" value="Genomic_DNA"/>
</dbReference>
<dbReference type="EMBL" id="AF051742">
    <property type="protein sequence ID" value="AAC32161.1"/>
    <property type="molecule type" value="Genomic_DNA"/>
</dbReference>
<dbReference type="SMR" id="O65050"/>
<dbReference type="GO" id="GO:0022625">
    <property type="term" value="C:cytosolic large ribosomal subunit"/>
    <property type="evidence" value="ECO:0007669"/>
    <property type="project" value="TreeGrafter"/>
</dbReference>
<dbReference type="GO" id="GO:0003723">
    <property type="term" value="F:RNA binding"/>
    <property type="evidence" value="ECO:0007669"/>
    <property type="project" value="TreeGrafter"/>
</dbReference>
<dbReference type="GO" id="GO:0003735">
    <property type="term" value="F:structural constituent of ribosome"/>
    <property type="evidence" value="ECO:0007669"/>
    <property type="project" value="InterPro"/>
</dbReference>
<dbReference type="GO" id="GO:0002181">
    <property type="term" value="P:cytoplasmic translation"/>
    <property type="evidence" value="ECO:0007669"/>
    <property type="project" value="TreeGrafter"/>
</dbReference>
<dbReference type="FunFam" id="3.40.1120.10:FF:000001">
    <property type="entry name" value="Ribosomal protein L15"/>
    <property type="match status" value="1"/>
</dbReference>
<dbReference type="Gene3D" id="3.40.1120.10">
    <property type="entry name" value="Ribosomal protein l15e"/>
    <property type="match status" value="1"/>
</dbReference>
<dbReference type="InterPro" id="IPR024794">
    <property type="entry name" value="Rbsml_eL15_core_dom_sf"/>
</dbReference>
<dbReference type="InterPro" id="IPR000439">
    <property type="entry name" value="Ribosomal_eL15"/>
</dbReference>
<dbReference type="InterPro" id="IPR020925">
    <property type="entry name" value="Ribosomal_eL15_CS"/>
</dbReference>
<dbReference type="InterPro" id="IPR012678">
    <property type="entry name" value="Ribosomal_uL23/eL15/eS24_sf"/>
</dbReference>
<dbReference type="NCBIfam" id="NF003269">
    <property type="entry name" value="PRK04243.1"/>
    <property type="match status" value="1"/>
</dbReference>
<dbReference type="PANTHER" id="PTHR11847:SF4">
    <property type="entry name" value="LARGE RIBOSOMAL SUBUNIT PROTEIN EL15"/>
    <property type="match status" value="1"/>
</dbReference>
<dbReference type="PANTHER" id="PTHR11847">
    <property type="entry name" value="RIBOSOMAL PROTEIN L15"/>
    <property type="match status" value="1"/>
</dbReference>
<dbReference type="Pfam" id="PF00827">
    <property type="entry name" value="Ribosomal_L15e"/>
    <property type="match status" value="1"/>
</dbReference>
<dbReference type="SMART" id="SM01384">
    <property type="entry name" value="Ribosomal_L15e"/>
    <property type="match status" value="1"/>
</dbReference>
<dbReference type="SUPFAM" id="SSF54189">
    <property type="entry name" value="Ribosomal proteins S24e, L23 and L15e"/>
    <property type="match status" value="1"/>
</dbReference>
<dbReference type="PROSITE" id="PS01194">
    <property type="entry name" value="RIBOSOMAL_L15E"/>
    <property type="match status" value="1"/>
</dbReference>
<evidence type="ECO:0000305" key="1"/>
<organism>
    <name type="scientific">Picea mariana</name>
    <name type="common">Black spruce</name>
    <name type="synonym">Abies mariana</name>
    <dbReference type="NCBI Taxonomy" id="3335"/>
    <lineage>
        <taxon>Eukaryota</taxon>
        <taxon>Viridiplantae</taxon>
        <taxon>Streptophyta</taxon>
        <taxon>Embryophyta</taxon>
        <taxon>Tracheophyta</taxon>
        <taxon>Spermatophyta</taxon>
        <taxon>Pinopsida</taxon>
        <taxon>Pinidae</taxon>
        <taxon>Conifers I</taxon>
        <taxon>Pinales</taxon>
        <taxon>Pinaceae</taxon>
        <taxon>Picea</taxon>
    </lineage>
</organism>
<accession>O65050</accession>